<organism>
    <name type="scientific">Staphylococcus epidermidis (strain ATCC 35984 / DSM 28319 / BCRC 17069 / CCUG 31568 / BM 3577 / RP62A)</name>
    <dbReference type="NCBI Taxonomy" id="176279"/>
    <lineage>
        <taxon>Bacteria</taxon>
        <taxon>Bacillati</taxon>
        <taxon>Bacillota</taxon>
        <taxon>Bacilli</taxon>
        <taxon>Bacillales</taxon>
        <taxon>Staphylococcaceae</taxon>
        <taxon>Staphylococcus</taxon>
    </lineage>
</organism>
<reference key="1">
    <citation type="journal article" date="2005" name="J. Bacteriol.">
        <title>Insights on evolution of virulence and resistance from the complete genome analysis of an early methicillin-resistant Staphylococcus aureus strain and a biofilm-producing methicillin-resistant Staphylococcus epidermidis strain.</title>
        <authorList>
            <person name="Gill S.R."/>
            <person name="Fouts D.E."/>
            <person name="Archer G.L."/>
            <person name="Mongodin E.F."/>
            <person name="DeBoy R.T."/>
            <person name="Ravel J."/>
            <person name="Paulsen I.T."/>
            <person name="Kolonay J.F."/>
            <person name="Brinkac L.M."/>
            <person name="Beanan M.J."/>
            <person name="Dodson R.J."/>
            <person name="Daugherty S.C."/>
            <person name="Madupu R."/>
            <person name="Angiuoli S.V."/>
            <person name="Durkin A.S."/>
            <person name="Haft D.H."/>
            <person name="Vamathevan J.J."/>
            <person name="Khouri H."/>
            <person name="Utterback T.R."/>
            <person name="Lee C."/>
            <person name="Dimitrov G."/>
            <person name="Jiang L."/>
            <person name="Qin H."/>
            <person name="Weidman J."/>
            <person name="Tran K."/>
            <person name="Kang K.H."/>
            <person name="Hance I.R."/>
            <person name="Nelson K.E."/>
            <person name="Fraser C.M."/>
        </authorList>
    </citation>
    <scope>NUCLEOTIDE SEQUENCE [LARGE SCALE GENOMIC DNA]</scope>
    <source>
        <strain>ATCC 35984 / DSM 28319 / BCRC 17069 / CCUG 31568 / BM 3577 / RP62A</strain>
    </source>
</reference>
<name>Y1006_STAEQ</name>
<accession>Q5HPA7</accession>
<feature type="chain" id="PRO_0000272015" description="Bacilliredoxin SERP1006">
    <location>
        <begin position="1"/>
        <end position="145"/>
    </location>
</feature>
<keyword id="KW-1185">Reference proteome</keyword>
<protein>
    <recommendedName>
        <fullName evidence="1">Bacilliredoxin SERP1006</fullName>
    </recommendedName>
</protein>
<gene>
    <name type="ordered locus">SERP1006</name>
</gene>
<dbReference type="EMBL" id="CP000029">
    <property type="protein sequence ID" value="AAW54375.1"/>
    <property type="molecule type" value="Genomic_DNA"/>
</dbReference>
<dbReference type="SMR" id="Q5HPA7"/>
<dbReference type="STRING" id="176279.SERP1006"/>
<dbReference type="KEGG" id="ser:SERP1006"/>
<dbReference type="eggNOG" id="ENOG5030YIF">
    <property type="taxonomic scope" value="Bacteria"/>
</dbReference>
<dbReference type="HOGENOM" id="CLU_132521_0_0_9"/>
<dbReference type="Proteomes" id="UP000000531">
    <property type="component" value="Chromosome"/>
</dbReference>
<dbReference type="GO" id="GO:0045454">
    <property type="term" value="P:cell redox homeostasis"/>
    <property type="evidence" value="ECO:0000250"/>
    <property type="project" value="UniProtKB"/>
</dbReference>
<dbReference type="Gene3D" id="3.40.30.10">
    <property type="entry name" value="Glutaredoxin"/>
    <property type="match status" value="1"/>
</dbReference>
<dbReference type="InterPro" id="IPR009474">
    <property type="entry name" value="BrxB/BrxA"/>
</dbReference>
<dbReference type="NCBIfam" id="TIGR04191">
    <property type="entry name" value="YphP_YqiW"/>
    <property type="match status" value="1"/>
</dbReference>
<dbReference type="PANTHER" id="PTHR40052:SF2">
    <property type="entry name" value="BACILLIREDOXIN BRXA"/>
    <property type="match status" value="1"/>
</dbReference>
<dbReference type="PANTHER" id="PTHR40052">
    <property type="entry name" value="UPF0403 PROTEIN YQIW-RELATED"/>
    <property type="match status" value="1"/>
</dbReference>
<dbReference type="Pfam" id="PF06491">
    <property type="entry name" value="Disulph_isomer"/>
    <property type="match status" value="1"/>
</dbReference>
<proteinExistence type="inferred from homology"/>
<comment type="similarity">
    <text evidence="1">Belongs to the bacilliredoxin family.</text>
</comment>
<evidence type="ECO:0000305" key="1"/>
<sequence length="145" mass="16196">MNGYEAYMKELAQQMRAELTDNGFTSLETSDDVNQYMQNIDNDDTTFVVINSTCGCAAGLARPAAVAVAEQNEVKPDHKVTVFAGQDKEATQTMRDYIQQVPSSPSYALFKGQHLVHFIPREHIEGRDINDIAMDLKDAFDDNCQ</sequence>